<protein>
    <recommendedName>
        <fullName evidence="1">Elongation factor 4</fullName>
        <shortName evidence="1">EF-4</shortName>
        <ecNumber evidence="1">3.6.5.n1</ecNumber>
    </recommendedName>
    <alternativeName>
        <fullName evidence="1">Ribosomal back-translocase LepA</fullName>
    </alternativeName>
</protein>
<reference key="1">
    <citation type="journal article" date="2008" name="Appl. Environ. Microbiol.">
        <title>Genome of the epsilonproteobacterial chemolithoautotroph Sulfurimonas denitrificans.</title>
        <authorList>
            <person name="Sievert S.M."/>
            <person name="Scott K.M."/>
            <person name="Klotz M.G."/>
            <person name="Chain P.S.G."/>
            <person name="Hauser L.J."/>
            <person name="Hemp J."/>
            <person name="Huegler M."/>
            <person name="Land M."/>
            <person name="Lapidus A."/>
            <person name="Larimer F.W."/>
            <person name="Lucas S."/>
            <person name="Malfatti S.A."/>
            <person name="Meyer F."/>
            <person name="Paulsen I.T."/>
            <person name="Ren Q."/>
            <person name="Simon J."/>
            <person name="Bailey K."/>
            <person name="Diaz E."/>
            <person name="Fitzpatrick K.A."/>
            <person name="Glover B."/>
            <person name="Gwatney N."/>
            <person name="Korajkic A."/>
            <person name="Long A."/>
            <person name="Mobberley J.M."/>
            <person name="Pantry S.N."/>
            <person name="Pazder G."/>
            <person name="Peterson S."/>
            <person name="Quintanilla J.D."/>
            <person name="Sprinkle R."/>
            <person name="Stephens J."/>
            <person name="Thomas P."/>
            <person name="Vaughn R."/>
            <person name="Weber M.J."/>
            <person name="Wooten L.L."/>
        </authorList>
    </citation>
    <scope>NUCLEOTIDE SEQUENCE [LARGE SCALE GENOMIC DNA]</scope>
    <source>
        <strain>ATCC 33889 / DSM 1251</strain>
    </source>
</reference>
<proteinExistence type="inferred from homology"/>
<dbReference type="EC" id="3.6.5.n1" evidence="1"/>
<dbReference type="EMBL" id="CP000153">
    <property type="protein sequence ID" value="ABB44914.1"/>
    <property type="molecule type" value="Genomic_DNA"/>
</dbReference>
<dbReference type="RefSeq" id="WP_011373255.1">
    <property type="nucleotide sequence ID" value="NC_007575.1"/>
</dbReference>
<dbReference type="SMR" id="Q30Q17"/>
<dbReference type="STRING" id="326298.Suden_1637"/>
<dbReference type="KEGG" id="tdn:Suden_1637"/>
<dbReference type="eggNOG" id="COG0481">
    <property type="taxonomic scope" value="Bacteria"/>
</dbReference>
<dbReference type="HOGENOM" id="CLU_009995_3_3_7"/>
<dbReference type="OrthoDB" id="9804431at2"/>
<dbReference type="Proteomes" id="UP000002714">
    <property type="component" value="Chromosome"/>
</dbReference>
<dbReference type="GO" id="GO:0005886">
    <property type="term" value="C:plasma membrane"/>
    <property type="evidence" value="ECO:0007669"/>
    <property type="project" value="UniProtKB-SubCell"/>
</dbReference>
<dbReference type="GO" id="GO:0005525">
    <property type="term" value="F:GTP binding"/>
    <property type="evidence" value="ECO:0007669"/>
    <property type="project" value="UniProtKB-UniRule"/>
</dbReference>
<dbReference type="GO" id="GO:0003924">
    <property type="term" value="F:GTPase activity"/>
    <property type="evidence" value="ECO:0007669"/>
    <property type="project" value="UniProtKB-UniRule"/>
</dbReference>
<dbReference type="GO" id="GO:0043022">
    <property type="term" value="F:ribosome binding"/>
    <property type="evidence" value="ECO:0007669"/>
    <property type="project" value="UniProtKB-UniRule"/>
</dbReference>
<dbReference type="GO" id="GO:0003746">
    <property type="term" value="F:translation elongation factor activity"/>
    <property type="evidence" value="ECO:0007669"/>
    <property type="project" value="UniProtKB-UniRule"/>
</dbReference>
<dbReference type="GO" id="GO:0045727">
    <property type="term" value="P:positive regulation of translation"/>
    <property type="evidence" value="ECO:0007669"/>
    <property type="project" value="UniProtKB-UniRule"/>
</dbReference>
<dbReference type="CDD" id="cd16260">
    <property type="entry name" value="EF4_III"/>
    <property type="match status" value="1"/>
</dbReference>
<dbReference type="CDD" id="cd01890">
    <property type="entry name" value="LepA"/>
    <property type="match status" value="1"/>
</dbReference>
<dbReference type="CDD" id="cd03709">
    <property type="entry name" value="lepA_C"/>
    <property type="match status" value="1"/>
</dbReference>
<dbReference type="FunFam" id="3.40.50.300:FF:000078">
    <property type="entry name" value="Elongation factor 4"/>
    <property type="match status" value="1"/>
</dbReference>
<dbReference type="FunFam" id="3.30.70.240:FF:000007">
    <property type="entry name" value="Translation factor GUF1, mitochondrial"/>
    <property type="match status" value="1"/>
</dbReference>
<dbReference type="FunFam" id="3.30.70.2570:FF:000001">
    <property type="entry name" value="Translation factor GUF1, mitochondrial"/>
    <property type="match status" value="1"/>
</dbReference>
<dbReference type="FunFam" id="3.30.70.870:FF:000004">
    <property type="entry name" value="Translation factor GUF1, mitochondrial"/>
    <property type="match status" value="1"/>
</dbReference>
<dbReference type="Gene3D" id="3.30.70.240">
    <property type="match status" value="1"/>
</dbReference>
<dbReference type="Gene3D" id="3.30.70.2570">
    <property type="entry name" value="Elongation factor 4, C-terminal domain"/>
    <property type="match status" value="1"/>
</dbReference>
<dbReference type="Gene3D" id="3.30.70.870">
    <property type="entry name" value="Elongation Factor G (Translational Gtpase), domain 3"/>
    <property type="match status" value="1"/>
</dbReference>
<dbReference type="Gene3D" id="3.40.50.300">
    <property type="entry name" value="P-loop containing nucleotide triphosphate hydrolases"/>
    <property type="match status" value="1"/>
</dbReference>
<dbReference type="Gene3D" id="2.40.30.10">
    <property type="entry name" value="Translation factors"/>
    <property type="match status" value="1"/>
</dbReference>
<dbReference type="HAMAP" id="MF_00071">
    <property type="entry name" value="LepA"/>
    <property type="match status" value="1"/>
</dbReference>
<dbReference type="InterPro" id="IPR006297">
    <property type="entry name" value="EF-4"/>
</dbReference>
<dbReference type="InterPro" id="IPR035647">
    <property type="entry name" value="EFG_III/V"/>
</dbReference>
<dbReference type="InterPro" id="IPR000640">
    <property type="entry name" value="EFG_V-like"/>
</dbReference>
<dbReference type="InterPro" id="IPR031157">
    <property type="entry name" value="G_TR_CS"/>
</dbReference>
<dbReference type="InterPro" id="IPR038363">
    <property type="entry name" value="LepA_C_sf"/>
</dbReference>
<dbReference type="InterPro" id="IPR013842">
    <property type="entry name" value="LepA_CTD"/>
</dbReference>
<dbReference type="InterPro" id="IPR035654">
    <property type="entry name" value="LepA_IV"/>
</dbReference>
<dbReference type="InterPro" id="IPR027417">
    <property type="entry name" value="P-loop_NTPase"/>
</dbReference>
<dbReference type="InterPro" id="IPR005225">
    <property type="entry name" value="Small_GTP-bd"/>
</dbReference>
<dbReference type="InterPro" id="IPR000795">
    <property type="entry name" value="T_Tr_GTP-bd_dom"/>
</dbReference>
<dbReference type="InterPro" id="IPR009000">
    <property type="entry name" value="Transl_B-barrel_sf"/>
</dbReference>
<dbReference type="NCBIfam" id="TIGR01393">
    <property type="entry name" value="lepA"/>
    <property type="match status" value="1"/>
</dbReference>
<dbReference type="NCBIfam" id="TIGR00231">
    <property type="entry name" value="small_GTP"/>
    <property type="match status" value="1"/>
</dbReference>
<dbReference type="PANTHER" id="PTHR43512:SF4">
    <property type="entry name" value="TRANSLATION FACTOR GUF1 HOMOLOG, CHLOROPLASTIC"/>
    <property type="match status" value="1"/>
</dbReference>
<dbReference type="PANTHER" id="PTHR43512">
    <property type="entry name" value="TRANSLATION FACTOR GUF1-RELATED"/>
    <property type="match status" value="1"/>
</dbReference>
<dbReference type="Pfam" id="PF00679">
    <property type="entry name" value="EFG_C"/>
    <property type="match status" value="1"/>
</dbReference>
<dbReference type="Pfam" id="PF00009">
    <property type="entry name" value="GTP_EFTU"/>
    <property type="match status" value="1"/>
</dbReference>
<dbReference type="Pfam" id="PF06421">
    <property type="entry name" value="LepA_C"/>
    <property type="match status" value="1"/>
</dbReference>
<dbReference type="PRINTS" id="PR00315">
    <property type="entry name" value="ELONGATNFCT"/>
</dbReference>
<dbReference type="SUPFAM" id="SSF54980">
    <property type="entry name" value="EF-G C-terminal domain-like"/>
    <property type="match status" value="2"/>
</dbReference>
<dbReference type="SUPFAM" id="SSF52540">
    <property type="entry name" value="P-loop containing nucleoside triphosphate hydrolases"/>
    <property type="match status" value="1"/>
</dbReference>
<dbReference type="SUPFAM" id="SSF50447">
    <property type="entry name" value="Translation proteins"/>
    <property type="match status" value="1"/>
</dbReference>
<dbReference type="PROSITE" id="PS00301">
    <property type="entry name" value="G_TR_1"/>
    <property type="match status" value="1"/>
</dbReference>
<dbReference type="PROSITE" id="PS51722">
    <property type="entry name" value="G_TR_2"/>
    <property type="match status" value="1"/>
</dbReference>
<organism>
    <name type="scientific">Sulfurimonas denitrificans (strain ATCC 33889 / DSM 1251)</name>
    <name type="common">Thiomicrospira denitrificans (strain ATCC 33889 / DSM 1251)</name>
    <dbReference type="NCBI Taxonomy" id="326298"/>
    <lineage>
        <taxon>Bacteria</taxon>
        <taxon>Pseudomonadati</taxon>
        <taxon>Campylobacterota</taxon>
        <taxon>Epsilonproteobacteria</taxon>
        <taxon>Campylobacterales</taxon>
        <taxon>Sulfurimonadaceae</taxon>
        <taxon>Sulfurimonas</taxon>
    </lineage>
</organism>
<accession>Q30Q17</accession>
<sequence>MKNIRNFSIIAHIDHGKSTLADRIIQECGSVSDRELGKQMMDTMDIEKERGITIKAQSVRLDYVKDGEHYILNLIDTPGHVDFSYEVSKSLASSDGALLIVDAAQGVEAQTIANVYLAMENNLTLIPVINKIDLPAADPTKVAEEIETSIGIDATDAVLVSAKTGVGIRALIDAIVDRIPAPVGDSNAPTKAIIYDSWFDPYLGALGLVRVFDGEIKVNQLVKIMSNGEEHQVLDLMYPHPLKRKKTPVIKTGEIGIVVLGLKEVHVVNVGDTITDAKNPTCEPVVEYEPAKPFVFAGIYPIDTDEFENLRDALDKLRLNDSSLSFQPETSLALGFGFRVGFLGMLHMEVVKERLEREFNLDLIASAPSVIYKVYLNNGEEIHVHNPSELPEVNRIDRIEEPYIKATVITPSEYLGNIITLLINKRGTQTKMTYLNQDRVMLEYEVPMNEIVMDFYDKLKSISKGYASFDYEPIEFRVGDLVKLDIKVAGEAVDALSIVVPRNQALPRGRVLVKNMKEIIPRQLFEVAVQASLGSQVIARETVKSMGKNVTAKCYGGDITRKRKLLEKQKEGKKRMKSIGKVQLPQEAFMSVLKMD</sequence>
<name>LEPA_SULDN</name>
<gene>
    <name evidence="1" type="primary">lepA</name>
    <name type="ordered locus">Suden_1637</name>
</gene>
<feature type="chain" id="PRO_0000265723" description="Elongation factor 4">
    <location>
        <begin position="1"/>
        <end position="596"/>
    </location>
</feature>
<feature type="domain" description="tr-type G">
    <location>
        <begin position="2"/>
        <end position="183"/>
    </location>
</feature>
<feature type="binding site" evidence="1">
    <location>
        <begin position="14"/>
        <end position="19"/>
    </location>
    <ligand>
        <name>GTP</name>
        <dbReference type="ChEBI" id="CHEBI:37565"/>
    </ligand>
</feature>
<feature type="binding site" evidence="1">
    <location>
        <begin position="130"/>
        <end position="133"/>
    </location>
    <ligand>
        <name>GTP</name>
        <dbReference type="ChEBI" id="CHEBI:37565"/>
    </ligand>
</feature>
<comment type="function">
    <text evidence="1">Required for accurate and efficient protein synthesis under certain stress conditions. May act as a fidelity factor of the translation reaction, by catalyzing a one-codon backward translocation of tRNAs on improperly translocated ribosomes. Back-translocation proceeds from a post-translocation (POST) complex to a pre-translocation (PRE) complex, thus giving elongation factor G a second chance to translocate the tRNAs correctly. Binds to ribosomes in a GTP-dependent manner.</text>
</comment>
<comment type="catalytic activity">
    <reaction evidence="1">
        <text>GTP + H2O = GDP + phosphate + H(+)</text>
        <dbReference type="Rhea" id="RHEA:19669"/>
        <dbReference type="ChEBI" id="CHEBI:15377"/>
        <dbReference type="ChEBI" id="CHEBI:15378"/>
        <dbReference type="ChEBI" id="CHEBI:37565"/>
        <dbReference type="ChEBI" id="CHEBI:43474"/>
        <dbReference type="ChEBI" id="CHEBI:58189"/>
        <dbReference type="EC" id="3.6.5.n1"/>
    </reaction>
</comment>
<comment type="subcellular location">
    <subcellularLocation>
        <location evidence="1">Cell inner membrane</location>
        <topology evidence="1">Peripheral membrane protein</topology>
        <orientation evidence="1">Cytoplasmic side</orientation>
    </subcellularLocation>
</comment>
<comment type="similarity">
    <text evidence="1">Belongs to the TRAFAC class translation factor GTPase superfamily. Classic translation factor GTPase family. LepA subfamily.</text>
</comment>
<keyword id="KW-0997">Cell inner membrane</keyword>
<keyword id="KW-1003">Cell membrane</keyword>
<keyword id="KW-0342">GTP-binding</keyword>
<keyword id="KW-0378">Hydrolase</keyword>
<keyword id="KW-0472">Membrane</keyword>
<keyword id="KW-0547">Nucleotide-binding</keyword>
<keyword id="KW-0648">Protein biosynthesis</keyword>
<keyword id="KW-1185">Reference proteome</keyword>
<evidence type="ECO:0000255" key="1">
    <source>
        <dbReference type="HAMAP-Rule" id="MF_00071"/>
    </source>
</evidence>